<evidence type="ECO:0000255" key="1">
    <source>
        <dbReference type="HAMAP-Rule" id="MF_00759"/>
    </source>
</evidence>
<keyword id="KW-0963">Cytoplasm</keyword>
<keyword id="KW-0227">DNA damage</keyword>
<keyword id="KW-0234">DNA repair</keyword>
<keyword id="KW-0255">Endonuclease</keyword>
<keyword id="KW-0378">Hydrolase</keyword>
<keyword id="KW-0540">Nuclease</keyword>
<proteinExistence type="inferred from homology"/>
<gene>
    <name evidence="1" type="primary">mutH</name>
    <name type="ordered locus">KPN78578_31770</name>
    <name type="ORF">KPN_03240</name>
</gene>
<protein>
    <recommendedName>
        <fullName evidence="1">DNA mismatch repair protein MutH</fullName>
    </recommendedName>
    <alternativeName>
        <fullName evidence="1">Methyl-directed mismatch repair protein</fullName>
    </alternativeName>
</protein>
<accession>A6TDG7</accession>
<comment type="function">
    <text evidence="1">Sequence-specific endonuclease that cleaves unmethylated GATC sequences. It is involved in DNA mismatch repair.</text>
</comment>
<comment type="subcellular location">
    <subcellularLocation>
        <location evidence="1">Cytoplasm</location>
    </subcellularLocation>
</comment>
<comment type="similarity">
    <text evidence="1">Belongs to the MutH family.</text>
</comment>
<feature type="chain" id="PRO_1000046701" description="DNA mismatch repair protein MutH">
    <location>
        <begin position="1"/>
        <end position="231"/>
    </location>
</feature>
<organism>
    <name type="scientific">Klebsiella pneumoniae subsp. pneumoniae (strain ATCC 700721 / MGH 78578)</name>
    <dbReference type="NCBI Taxonomy" id="272620"/>
    <lineage>
        <taxon>Bacteria</taxon>
        <taxon>Pseudomonadati</taxon>
        <taxon>Pseudomonadota</taxon>
        <taxon>Gammaproteobacteria</taxon>
        <taxon>Enterobacterales</taxon>
        <taxon>Enterobacteriaceae</taxon>
        <taxon>Klebsiella/Raoultella group</taxon>
        <taxon>Klebsiella</taxon>
        <taxon>Klebsiella pneumoniae complex</taxon>
    </lineage>
</organism>
<reference key="1">
    <citation type="submission" date="2006-09" db="EMBL/GenBank/DDBJ databases">
        <authorList>
            <consortium name="The Klebsiella pneumonia Genome Sequencing Project"/>
            <person name="McClelland M."/>
            <person name="Sanderson E.K."/>
            <person name="Spieth J."/>
            <person name="Clifton W.S."/>
            <person name="Latreille P."/>
            <person name="Sabo A."/>
            <person name="Pepin K."/>
            <person name="Bhonagiri V."/>
            <person name="Porwollik S."/>
            <person name="Ali J."/>
            <person name="Wilson R.K."/>
        </authorList>
    </citation>
    <scope>NUCLEOTIDE SEQUENCE [LARGE SCALE GENOMIC DNA]</scope>
    <source>
        <strain>ATCC 700721 / MGH 78578</strain>
    </source>
</reference>
<name>MUTH_KLEP7</name>
<dbReference type="EMBL" id="CP000647">
    <property type="protein sequence ID" value="ABR78638.1"/>
    <property type="molecule type" value="Genomic_DNA"/>
</dbReference>
<dbReference type="RefSeq" id="WP_004143967.1">
    <property type="nucleotide sequence ID" value="NC_009648.1"/>
</dbReference>
<dbReference type="SMR" id="A6TDG7"/>
<dbReference type="STRING" id="272620.KPN_03240"/>
<dbReference type="PaxDb" id="272620-KPN_03240"/>
<dbReference type="EnsemblBacteria" id="ABR78638">
    <property type="protein sequence ID" value="ABR78638"/>
    <property type="gene ID" value="KPN_03240"/>
</dbReference>
<dbReference type="KEGG" id="kpn:KPN_03240"/>
<dbReference type="HOGENOM" id="CLU_086669_0_0_6"/>
<dbReference type="Proteomes" id="UP000000265">
    <property type="component" value="Chromosome"/>
</dbReference>
<dbReference type="GO" id="GO:0005737">
    <property type="term" value="C:cytoplasm"/>
    <property type="evidence" value="ECO:0007669"/>
    <property type="project" value="UniProtKB-SubCell"/>
</dbReference>
<dbReference type="GO" id="GO:0003677">
    <property type="term" value="F:DNA binding"/>
    <property type="evidence" value="ECO:0007669"/>
    <property type="project" value="InterPro"/>
</dbReference>
<dbReference type="GO" id="GO:0004519">
    <property type="term" value="F:endonuclease activity"/>
    <property type="evidence" value="ECO:0007669"/>
    <property type="project" value="UniProtKB-UniRule"/>
</dbReference>
<dbReference type="GO" id="GO:0006304">
    <property type="term" value="P:DNA modification"/>
    <property type="evidence" value="ECO:0007669"/>
    <property type="project" value="InterPro"/>
</dbReference>
<dbReference type="GO" id="GO:0006298">
    <property type="term" value="P:mismatch repair"/>
    <property type="evidence" value="ECO:0007669"/>
    <property type="project" value="UniProtKB-UniRule"/>
</dbReference>
<dbReference type="CDD" id="cd00583">
    <property type="entry name" value="MutH-like"/>
    <property type="match status" value="1"/>
</dbReference>
<dbReference type="FunFam" id="3.40.600.10:FF:000001">
    <property type="entry name" value="DNA mismatch repair protein MutH"/>
    <property type="match status" value="1"/>
</dbReference>
<dbReference type="Gene3D" id="3.40.600.10">
    <property type="entry name" value="DNA mismatch repair MutH/Restriction endonuclease, type II"/>
    <property type="match status" value="1"/>
</dbReference>
<dbReference type="HAMAP" id="MF_00759">
    <property type="entry name" value="MutH"/>
    <property type="match status" value="1"/>
</dbReference>
<dbReference type="InterPro" id="IPR004230">
    <property type="entry name" value="DNA_mismatch_repair_MutH"/>
</dbReference>
<dbReference type="InterPro" id="IPR011337">
    <property type="entry name" value="DNA_rep_MutH/RE_typeII_Sau3AI"/>
</dbReference>
<dbReference type="InterPro" id="IPR037057">
    <property type="entry name" value="DNA_rep_MutH/T2_RE_sf"/>
</dbReference>
<dbReference type="InterPro" id="IPR011335">
    <property type="entry name" value="Restrct_endonuc-II-like"/>
</dbReference>
<dbReference type="NCBIfam" id="TIGR02248">
    <property type="entry name" value="mutH_TIGR"/>
    <property type="match status" value="1"/>
</dbReference>
<dbReference type="NCBIfam" id="NF003458">
    <property type="entry name" value="PRK05070.1"/>
    <property type="match status" value="1"/>
</dbReference>
<dbReference type="Pfam" id="PF02976">
    <property type="entry name" value="MutH"/>
    <property type="match status" value="1"/>
</dbReference>
<dbReference type="SMART" id="SM00927">
    <property type="entry name" value="MutH"/>
    <property type="match status" value="1"/>
</dbReference>
<dbReference type="SUPFAM" id="SSF52980">
    <property type="entry name" value="Restriction endonuclease-like"/>
    <property type="match status" value="1"/>
</dbReference>
<sequence length="231" mass="25466">MPAIAPLASPPQSQEQLLAQARQLAGYSLGELAALAGIPIPRDLKRDKGWTGILLELWLGASAGSKPEQDFAALGVELKTIPIDSRGRPLETTFVCVAPLTGNSGVTWESSHVRHKLQRVLWIPVEGERTIPLAARRVGAPLLWSPDEDEERQLRMDWEELMDLIVLGEVERITARHGEVLQLRPKAANSKALTEAIGARGETILTLPRGFYLKKNFTAALLARHFLLQHD</sequence>